<keyword id="KW-0846">Cobalamin</keyword>
<keyword id="KW-0170">Cobalt</keyword>
<keyword id="KW-0963">Cytoplasm</keyword>
<keyword id="KW-0274">FAD</keyword>
<keyword id="KW-0285">Flavoprotein</keyword>
<keyword id="KW-0288">FMN</keyword>
<keyword id="KW-0521">NADP</keyword>
<keyword id="KW-0560">Oxidoreductase</keyword>
<keyword id="KW-0597">Phosphoprotein</keyword>
<keyword id="KW-1185">Reference proteome</keyword>
<keyword id="KW-0808">Transferase</keyword>
<gene>
    <name type="primary">mmachc</name>
    <name type="ORF">si:zfos-47c12.1</name>
</gene>
<name>MMAC_DANRE</name>
<evidence type="ECO:0000250" key="1">
    <source>
        <dbReference type="UniProtKB" id="Q9Y4U1"/>
    </source>
</evidence>
<evidence type="ECO:0000305" key="2"/>
<protein>
    <recommendedName>
        <fullName>Cyanocobalamin reductase / alkylcobalamin dealkylase</fullName>
    </recommendedName>
    <alternativeName>
        <fullName>Alkylcobalamin:glutathione S-alkyltransferase</fullName>
        <ecNumber evidence="1">2.5.1.151</ecNumber>
    </alternativeName>
    <alternativeName>
        <fullName>CblC</fullName>
    </alternativeName>
    <alternativeName>
        <fullName>Cyanocobalamin reductase (cyanide-eliminating)</fullName>
        <ecNumber evidence="1">1.16.1.6</ecNumber>
    </alternativeName>
    <alternativeName>
        <fullName>Methylmalonic aciduria and homocystinuria type C protein</fullName>
        <shortName>MMACHC</shortName>
    </alternativeName>
</protein>
<accession>Q5RFU5</accession>
<comment type="function">
    <text evidence="1">Cobalamin (vitamin B12) cytosolic chaperone that catalyzes the reductive decyanation of cyanocob(III)alamin (cyanocobalamin, CNCbl) to yield cob(II)alamin and cyanide, using FAD or FMN as cofactors and NADPH as cosubstrate. Cyanocobalamin constitutes the inactive form of vitamin B12 introduced from the diet, and is converted into the active cofactors methylcobalamin (MeCbl) involved in methionine biosynthesis, and 5'-deoxyadenosylcobalamin (AdoCbl) involved in the TCA cycle. Forms a complex with the lysosomal transporter ABCD4 and its chaperone LMBRD1, to transport cobalamin across the lysosomal membrane into the cytosol. The processing of cobalamin in the cytosol occurs in a multiprotein complex composed of at least MMACHC, MMADHC, MTRR (methionine synthase reductase) and MTR (methionine synthase) which may contribute to shuttle safely and efficiently cobalamin towards MTR in order to produce methionine. Also acts as a glutathione transferase by catalyzing the dealkylation of the alkylcob(III)alamins MeCbl and AdoCbl, using the thiolate of glutathione for nucleophilic displacement to generate cob(I)alamin and the corresponding glutathione thioether. The conversion of incoming MeCbl or AdoCbl into a common intermediate cob(I)alamin is necessary to meet the cellular needs for both cofactors. Cysteine and homocysteine cannot substitute for glutathione in this reaction.</text>
</comment>
<comment type="catalytic activity">
    <reaction evidence="1">
        <text>2 cob(II)alamin-[cyanocobalamin reductase] + 2 hydrogen cyanide + NADP(+) = 2 cyanocob(III)alamin + 2 apo-[cyanocobalamin reductase] + NADPH + H(+)</text>
        <dbReference type="Rhea" id="RHEA:16113"/>
        <dbReference type="Rhea" id="RHEA-COMP:14717"/>
        <dbReference type="Rhea" id="RHEA-COMP:14718"/>
        <dbReference type="ChEBI" id="CHEBI:15378"/>
        <dbReference type="ChEBI" id="CHEBI:16304"/>
        <dbReference type="ChEBI" id="CHEBI:17439"/>
        <dbReference type="ChEBI" id="CHEBI:18407"/>
        <dbReference type="ChEBI" id="CHEBI:57783"/>
        <dbReference type="ChEBI" id="CHEBI:58349"/>
        <dbReference type="ChEBI" id="CHEBI:83228"/>
        <dbReference type="EC" id="1.16.1.6"/>
    </reaction>
    <physiologicalReaction direction="right-to-left" evidence="1">
        <dbReference type="Rhea" id="RHEA:16115"/>
    </physiologicalReaction>
</comment>
<comment type="catalytic activity">
    <reaction evidence="1">
        <text>apo-[alkylcobalamin reductase] + an R-cob(III)alamin + glutathione = cob(I)alamin-[alkylcobalamin reductase] + an S-substituted glutathione + H(+)</text>
        <dbReference type="Rhea" id="RHEA:40719"/>
        <dbReference type="Rhea" id="RHEA-COMP:14730"/>
        <dbReference type="Rhea" id="RHEA-COMP:14731"/>
        <dbReference type="ChEBI" id="CHEBI:15378"/>
        <dbReference type="ChEBI" id="CHEBI:57925"/>
        <dbReference type="ChEBI" id="CHEBI:60488"/>
        <dbReference type="ChEBI" id="CHEBI:83228"/>
        <dbReference type="ChEBI" id="CHEBI:90779"/>
        <dbReference type="ChEBI" id="CHEBI:140785"/>
        <dbReference type="EC" id="2.5.1.151"/>
    </reaction>
    <physiologicalReaction direction="left-to-right" evidence="1">
        <dbReference type="Rhea" id="RHEA:40720"/>
    </physiologicalReaction>
</comment>
<comment type="catalytic activity">
    <reaction evidence="1">
        <text>apo-[alkylcobalamin reductase] + methylcob(III)alamin + glutathione = S-methyl glutathione + cob(I)alamin-[alkylcobalamin reductase] + H(+)</text>
        <dbReference type="Rhea" id="RHEA:63132"/>
        <dbReference type="Rhea" id="RHEA-COMP:14730"/>
        <dbReference type="Rhea" id="RHEA-COMP:14731"/>
        <dbReference type="ChEBI" id="CHEBI:15378"/>
        <dbReference type="ChEBI" id="CHEBI:28115"/>
        <dbReference type="ChEBI" id="CHEBI:57925"/>
        <dbReference type="ChEBI" id="CHEBI:60488"/>
        <dbReference type="ChEBI" id="CHEBI:83228"/>
        <dbReference type="ChEBI" id="CHEBI:141467"/>
        <dbReference type="EC" id="2.5.1.151"/>
    </reaction>
    <physiologicalReaction direction="left-to-right" evidence="1">
        <dbReference type="Rhea" id="RHEA:63133"/>
    </physiologicalReaction>
</comment>
<comment type="catalytic activity">
    <reaction evidence="1">
        <text>apo-[alkylcobalamin reductase] + adenosylcob(III)alamin + glutathione = S-adenosylglutathione + cob(I)alamin-[alkylcobalamin reductase] + H(+)</text>
        <dbReference type="Rhea" id="RHEA:63136"/>
        <dbReference type="Rhea" id="RHEA-COMP:14730"/>
        <dbReference type="Rhea" id="RHEA-COMP:14731"/>
        <dbReference type="ChEBI" id="CHEBI:15378"/>
        <dbReference type="ChEBI" id="CHEBI:18408"/>
        <dbReference type="ChEBI" id="CHEBI:57925"/>
        <dbReference type="ChEBI" id="CHEBI:60488"/>
        <dbReference type="ChEBI" id="CHEBI:83228"/>
        <dbReference type="ChEBI" id="CHEBI:146184"/>
        <dbReference type="EC" id="2.5.1.151"/>
    </reaction>
    <physiologicalReaction direction="left-to-right" evidence="1">
        <dbReference type="Rhea" id="RHEA:63137"/>
    </physiologicalReaction>
</comment>
<comment type="cofactor">
    <cofactor evidence="1">
        <name>FAD</name>
        <dbReference type="ChEBI" id="CHEBI:57692"/>
    </cofactor>
    <cofactor evidence="1">
        <name>FMN</name>
        <dbReference type="ChEBI" id="CHEBI:58210"/>
    </cofactor>
    <text evidence="1">Can utilize both FAD and FMN.</text>
</comment>
<comment type="subunit">
    <text evidence="1">Monomer in the absence of bound substrate. Homodimer; dimerization is triggered by binding to FMN or adenosylcobalamin. Heterodimer with MMADHC.</text>
</comment>
<comment type="subcellular location">
    <subcellularLocation>
        <location evidence="1">Cytoplasm</location>
        <location evidence="1">Cytosol</location>
    </subcellularLocation>
</comment>
<comment type="similarity">
    <text evidence="2">Belongs to the MMACHC family.</text>
</comment>
<organism>
    <name type="scientific">Danio rerio</name>
    <name type="common">Zebrafish</name>
    <name type="synonym">Brachydanio rerio</name>
    <dbReference type="NCBI Taxonomy" id="7955"/>
    <lineage>
        <taxon>Eukaryota</taxon>
        <taxon>Metazoa</taxon>
        <taxon>Chordata</taxon>
        <taxon>Craniata</taxon>
        <taxon>Vertebrata</taxon>
        <taxon>Euteleostomi</taxon>
        <taxon>Actinopterygii</taxon>
        <taxon>Neopterygii</taxon>
        <taxon>Teleostei</taxon>
        <taxon>Ostariophysi</taxon>
        <taxon>Cypriniformes</taxon>
        <taxon>Danionidae</taxon>
        <taxon>Danioninae</taxon>
        <taxon>Danio</taxon>
    </lineage>
</organism>
<sequence>MAISSERVEELLRTFRESLKAKGFEIYPFKVGWYNAVLTAAHHLQYPADTLAVLVISTPAMFECAFLPFLQSQSCESLRDPIDQCTAHTLSACISLCFANQFVDVSYDYEMLPSRKPKFLAQTAAHVSGAAYYYQTSDIHNPPWGEKKMFGVCVHPQLGGWFAIRALLVFRDVQAGAGFQQRDPADCVCTQEERIRLLESFNLRWRDWSYRDIVPAEDRYSDQQKQYFITPPGQRRALLRQWGYLTDTQS</sequence>
<feature type="chain" id="PRO_0000076261" description="Cyanocobalamin reductase / alkylcobalamin dealkylase">
    <location>
        <begin position="1"/>
        <end position="250"/>
    </location>
</feature>
<feature type="binding site" evidence="1">
    <location>
        <position position="108"/>
    </location>
    <ligand>
        <name>substrate</name>
    </ligand>
</feature>
<feature type="binding site" evidence="1">
    <location>
        <begin position="119"/>
        <end position="122"/>
    </location>
    <ligand>
        <name>substrate</name>
    </ligand>
</feature>
<feature type="binding site" evidence="1">
    <location>
        <begin position="133"/>
        <end position="135"/>
    </location>
    <ligand>
        <name>substrate</name>
    </ligand>
</feature>
<feature type="binding site" evidence="1">
    <location>
        <position position="153"/>
    </location>
    <ligand>
        <name>substrate</name>
    </ligand>
</feature>
<feature type="binding site" evidence="1">
    <location>
        <position position="164"/>
    </location>
    <ligand>
        <name>substrate</name>
    </ligand>
</feature>
<reference key="1">
    <citation type="journal article" date="2013" name="Nature">
        <title>The zebrafish reference genome sequence and its relationship to the human genome.</title>
        <authorList>
            <person name="Howe K."/>
            <person name="Clark M.D."/>
            <person name="Torroja C.F."/>
            <person name="Torrance J."/>
            <person name="Berthelot C."/>
            <person name="Muffato M."/>
            <person name="Collins J.E."/>
            <person name="Humphray S."/>
            <person name="McLaren K."/>
            <person name="Matthews L."/>
            <person name="McLaren S."/>
            <person name="Sealy I."/>
            <person name="Caccamo M."/>
            <person name="Churcher C."/>
            <person name="Scott C."/>
            <person name="Barrett J.C."/>
            <person name="Koch R."/>
            <person name="Rauch G.J."/>
            <person name="White S."/>
            <person name="Chow W."/>
            <person name="Kilian B."/>
            <person name="Quintais L.T."/>
            <person name="Guerra-Assuncao J.A."/>
            <person name="Zhou Y."/>
            <person name="Gu Y."/>
            <person name="Yen J."/>
            <person name="Vogel J.H."/>
            <person name="Eyre T."/>
            <person name="Redmond S."/>
            <person name="Banerjee R."/>
            <person name="Chi J."/>
            <person name="Fu B."/>
            <person name="Langley E."/>
            <person name="Maguire S.F."/>
            <person name="Laird G.K."/>
            <person name="Lloyd D."/>
            <person name="Kenyon E."/>
            <person name="Donaldson S."/>
            <person name="Sehra H."/>
            <person name="Almeida-King J."/>
            <person name="Loveland J."/>
            <person name="Trevanion S."/>
            <person name="Jones M."/>
            <person name="Quail M."/>
            <person name="Willey D."/>
            <person name="Hunt A."/>
            <person name="Burton J."/>
            <person name="Sims S."/>
            <person name="McLay K."/>
            <person name="Plumb B."/>
            <person name="Davis J."/>
            <person name="Clee C."/>
            <person name="Oliver K."/>
            <person name="Clark R."/>
            <person name="Riddle C."/>
            <person name="Elliot D."/>
            <person name="Threadgold G."/>
            <person name="Harden G."/>
            <person name="Ware D."/>
            <person name="Begum S."/>
            <person name="Mortimore B."/>
            <person name="Kerry G."/>
            <person name="Heath P."/>
            <person name="Phillimore B."/>
            <person name="Tracey A."/>
            <person name="Corby N."/>
            <person name="Dunn M."/>
            <person name="Johnson C."/>
            <person name="Wood J."/>
            <person name="Clark S."/>
            <person name="Pelan S."/>
            <person name="Griffiths G."/>
            <person name="Smith M."/>
            <person name="Glithero R."/>
            <person name="Howden P."/>
            <person name="Barker N."/>
            <person name="Lloyd C."/>
            <person name="Stevens C."/>
            <person name="Harley J."/>
            <person name="Holt K."/>
            <person name="Panagiotidis G."/>
            <person name="Lovell J."/>
            <person name="Beasley H."/>
            <person name="Henderson C."/>
            <person name="Gordon D."/>
            <person name="Auger K."/>
            <person name="Wright D."/>
            <person name="Collins J."/>
            <person name="Raisen C."/>
            <person name="Dyer L."/>
            <person name="Leung K."/>
            <person name="Robertson L."/>
            <person name="Ambridge K."/>
            <person name="Leongamornlert D."/>
            <person name="McGuire S."/>
            <person name="Gilderthorp R."/>
            <person name="Griffiths C."/>
            <person name="Manthravadi D."/>
            <person name="Nichol S."/>
            <person name="Barker G."/>
            <person name="Whitehead S."/>
            <person name="Kay M."/>
            <person name="Brown J."/>
            <person name="Murnane C."/>
            <person name="Gray E."/>
            <person name="Humphries M."/>
            <person name="Sycamore N."/>
            <person name="Barker D."/>
            <person name="Saunders D."/>
            <person name="Wallis J."/>
            <person name="Babbage A."/>
            <person name="Hammond S."/>
            <person name="Mashreghi-Mohammadi M."/>
            <person name="Barr L."/>
            <person name="Martin S."/>
            <person name="Wray P."/>
            <person name="Ellington A."/>
            <person name="Matthews N."/>
            <person name="Ellwood M."/>
            <person name="Woodmansey R."/>
            <person name="Clark G."/>
            <person name="Cooper J."/>
            <person name="Tromans A."/>
            <person name="Grafham D."/>
            <person name="Skuce C."/>
            <person name="Pandian R."/>
            <person name="Andrews R."/>
            <person name="Harrison E."/>
            <person name="Kimberley A."/>
            <person name="Garnett J."/>
            <person name="Fosker N."/>
            <person name="Hall R."/>
            <person name="Garner P."/>
            <person name="Kelly D."/>
            <person name="Bird C."/>
            <person name="Palmer S."/>
            <person name="Gehring I."/>
            <person name="Berger A."/>
            <person name="Dooley C.M."/>
            <person name="Ersan-Urun Z."/>
            <person name="Eser C."/>
            <person name="Geiger H."/>
            <person name="Geisler M."/>
            <person name="Karotki L."/>
            <person name="Kirn A."/>
            <person name="Konantz J."/>
            <person name="Konantz M."/>
            <person name="Oberlander M."/>
            <person name="Rudolph-Geiger S."/>
            <person name="Teucke M."/>
            <person name="Lanz C."/>
            <person name="Raddatz G."/>
            <person name="Osoegawa K."/>
            <person name="Zhu B."/>
            <person name="Rapp A."/>
            <person name="Widaa S."/>
            <person name="Langford C."/>
            <person name="Yang F."/>
            <person name="Schuster S.C."/>
            <person name="Carter N.P."/>
            <person name="Harrow J."/>
            <person name="Ning Z."/>
            <person name="Herrero J."/>
            <person name="Searle S.M."/>
            <person name="Enright A."/>
            <person name="Geisler R."/>
            <person name="Plasterk R.H."/>
            <person name="Lee C."/>
            <person name="Westerfield M."/>
            <person name="de Jong P.J."/>
            <person name="Zon L.I."/>
            <person name="Postlethwait J.H."/>
            <person name="Nusslein-Volhard C."/>
            <person name="Hubbard T.J."/>
            <person name="Roest Crollius H."/>
            <person name="Rogers J."/>
            <person name="Stemple D.L."/>
        </authorList>
    </citation>
    <scope>NUCLEOTIDE SEQUENCE [LARGE SCALE GENOMIC DNA]</scope>
    <source>
        <strain>Tuebingen</strain>
    </source>
</reference>
<proteinExistence type="inferred from homology"/>
<dbReference type="EC" id="2.5.1.151" evidence="1"/>
<dbReference type="EC" id="1.16.1.6" evidence="1"/>
<dbReference type="EMBL" id="CR854946">
    <property type="protein sequence ID" value="CAI12067.1"/>
    <property type="molecule type" value="Genomic_DNA"/>
</dbReference>
<dbReference type="RefSeq" id="NP_001108361.2">
    <property type="nucleotide sequence ID" value="NM_001114889.2"/>
</dbReference>
<dbReference type="SMR" id="Q5RFU5"/>
<dbReference type="FunCoup" id="Q5RFU5">
    <property type="interactions" value="938"/>
</dbReference>
<dbReference type="STRING" id="7955.ENSDARP00000117903"/>
<dbReference type="PaxDb" id="7955-ENSDARP00000117903"/>
<dbReference type="GeneID" id="555267"/>
<dbReference type="KEGG" id="dre:555267"/>
<dbReference type="AGR" id="ZFIN:ZDB-GENE-030131-3167"/>
<dbReference type="CTD" id="25974"/>
<dbReference type="ZFIN" id="ZDB-GENE-030131-3167">
    <property type="gene designation" value="mmachc"/>
</dbReference>
<dbReference type="eggNOG" id="KOG4552">
    <property type="taxonomic scope" value="Eukaryota"/>
</dbReference>
<dbReference type="InParanoid" id="Q5RFU5"/>
<dbReference type="OrthoDB" id="409189at2759"/>
<dbReference type="PhylomeDB" id="Q5RFU5"/>
<dbReference type="Reactome" id="R-DRE-9759218">
    <property type="pathway name" value="Cobalamin (Cbl) metabolism"/>
</dbReference>
<dbReference type="PRO" id="PR:Q5RFU5"/>
<dbReference type="Proteomes" id="UP000000437">
    <property type="component" value="Chromosome 20"/>
</dbReference>
<dbReference type="GO" id="GO:0005737">
    <property type="term" value="C:cytoplasm"/>
    <property type="evidence" value="ECO:0000318"/>
    <property type="project" value="GO_Central"/>
</dbReference>
<dbReference type="GO" id="GO:0005829">
    <property type="term" value="C:cytosol"/>
    <property type="evidence" value="ECO:0007669"/>
    <property type="project" value="UniProtKB-SubCell"/>
</dbReference>
<dbReference type="GO" id="GO:0031419">
    <property type="term" value="F:cobalamin binding"/>
    <property type="evidence" value="ECO:0007669"/>
    <property type="project" value="UniProtKB-KW"/>
</dbReference>
<dbReference type="GO" id="GO:0033787">
    <property type="term" value="F:cyanocobalamin reductase (cyanide-eliminating) (NADP+) activity"/>
    <property type="evidence" value="ECO:0000318"/>
    <property type="project" value="GO_Central"/>
</dbReference>
<dbReference type="GO" id="GO:0032451">
    <property type="term" value="F:demethylase activity"/>
    <property type="evidence" value="ECO:0000318"/>
    <property type="project" value="GO_Central"/>
</dbReference>
<dbReference type="GO" id="GO:0071949">
    <property type="term" value="F:FAD binding"/>
    <property type="evidence" value="ECO:0000318"/>
    <property type="project" value="GO_Central"/>
</dbReference>
<dbReference type="GO" id="GO:0016740">
    <property type="term" value="F:transferase activity"/>
    <property type="evidence" value="ECO:0007669"/>
    <property type="project" value="UniProtKB-KW"/>
</dbReference>
<dbReference type="GO" id="GO:0009235">
    <property type="term" value="P:cobalamin metabolic process"/>
    <property type="evidence" value="ECO:0000318"/>
    <property type="project" value="GO_Central"/>
</dbReference>
<dbReference type="GO" id="GO:0048703">
    <property type="term" value="P:embryonic viscerocranium morphogenesis"/>
    <property type="evidence" value="ECO:0000315"/>
    <property type="project" value="ZFIN"/>
</dbReference>
<dbReference type="GO" id="GO:0061181">
    <property type="term" value="P:regulation of chondrocyte development"/>
    <property type="evidence" value="ECO:0000315"/>
    <property type="project" value="ZFIN"/>
</dbReference>
<dbReference type="CDD" id="cd12959">
    <property type="entry name" value="MMACHC-like"/>
    <property type="match status" value="1"/>
</dbReference>
<dbReference type="InterPro" id="IPR032037">
    <property type="entry name" value="MMACHC"/>
</dbReference>
<dbReference type="PANTHER" id="PTHR31457:SF2">
    <property type="entry name" value="CYANOCOBALAMIN REDUCTASE _ ALKYLCOBALAMIN DEALKYLASE"/>
    <property type="match status" value="1"/>
</dbReference>
<dbReference type="PANTHER" id="PTHR31457">
    <property type="entry name" value="METHYLMALONIC ACIDURIA AND HOMOCYSTINURIA TYPE C PROTEIN"/>
    <property type="match status" value="1"/>
</dbReference>
<dbReference type="Pfam" id="PF16690">
    <property type="entry name" value="MMACHC"/>
    <property type="match status" value="1"/>
</dbReference>